<accession>P0DPT0</accession>
<protein>
    <recommendedName>
        <fullName evidence="6">Phospholipase A1 VesT1.02</fullName>
        <ecNumber evidence="5">3.1.1.32</ecNumber>
    </recommendedName>
</protein>
<sequence>FLPIPYSDDTVKMIILTSENKKHDFYTLDTIKKHNELKESIIKHQVAFITHGFTSSATAEHFLAVAEALLDKGNYLVIMIDWRVAACTNEIAGVKLAYYNYAVSNTRLVGNYIATVTKMLVQKYNVPMANIRLIGHSLGAHISGFAGKKVQELGLGKYSEIIGLDPAGPSFKSQECSQRICETDANYVQIIHTSNHLGTERTLGTVDFYMNNGKNQPGCGLPIIGETCSHTRAVKYFTECIRHECCLIGVPQSKNPQPVSKCTRNECVCVGLNAKTYPKTGSFYVPVESKAPYCNNKGKKI</sequence>
<proteinExistence type="evidence at protein level"/>
<keyword id="KW-0020">Allergen</keyword>
<keyword id="KW-0204">Cytolysis</keyword>
<keyword id="KW-0903">Direct protein sequencing</keyword>
<keyword id="KW-1015">Disulfide bond</keyword>
<keyword id="KW-0354">Hemolysis</keyword>
<keyword id="KW-0378">Hydrolase</keyword>
<keyword id="KW-0442">Lipid degradation</keyword>
<keyword id="KW-0443">Lipid metabolism</keyword>
<keyword id="KW-0964">Secreted</keyword>
<organism>
    <name type="scientific">Vespa tropica</name>
    <name type="common">Greater banded hornet</name>
    <name type="synonym">Sphex tropica</name>
    <dbReference type="NCBI Taxonomy" id="7450"/>
    <lineage>
        <taxon>Eukaryota</taxon>
        <taxon>Metazoa</taxon>
        <taxon>Ecdysozoa</taxon>
        <taxon>Arthropoda</taxon>
        <taxon>Hexapoda</taxon>
        <taxon>Insecta</taxon>
        <taxon>Pterygota</taxon>
        <taxon>Neoptera</taxon>
        <taxon>Endopterygota</taxon>
        <taxon>Hymenoptera</taxon>
        <taxon>Apocrita</taxon>
        <taxon>Aculeata</taxon>
        <taxon>Vespoidea</taxon>
        <taxon>Vespidae</taxon>
        <taxon>Vespinae</taxon>
        <taxon>Vespa</taxon>
    </lineage>
</organism>
<feature type="chain" id="PRO_0000446187" description="Phospholipase A1 VesT1.02" evidence="5">
    <location>
        <begin position="1"/>
        <end position="301"/>
    </location>
</feature>
<feature type="active site" description="Nucleophile" evidence="1">
    <location>
        <position position="137"/>
    </location>
</feature>
<feature type="active site" description="Charge relay system" evidence="4">
    <location>
        <position position="165"/>
    </location>
</feature>
<feature type="active site" description="Charge relay system" evidence="4">
    <location>
        <position position="230"/>
    </location>
</feature>
<feature type="disulfide bond" evidence="8">
    <location>
        <begin position="87"/>
        <end position="294"/>
    </location>
</feature>
<feature type="disulfide bond" evidence="8">
    <location>
        <begin position="176"/>
        <end position="245"/>
    </location>
</feature>
<feature type="disulfide bond" evidence="8">
    <location>
        <begin position="181"/>
        <end position="262"/>
    </location>
</feature>
<feature type="disulfide bond" evidence="8">
    <location>
        <begin position="219"/>
        <end position="228"/>
    </location>
</feature>
<feature type="disulfide bond" evidence="8">
    <location>
        <begin position="240"/>
        <end position="246"/>
    </location>
</feature>
<feature type="disulfide bond" evidence="8">
    <location>
        <begin position="267"/>
        <end position="269"/>
    </location>
</feature>
<feature type="sequence conflict" description="In Ref. 1; AA sequence." evidence="8" ref="1">
    <original>D</original>
    <variation>M</variation>
    <location>
        <position position="9"/>
    </location>
</feature>
<comment type="function">
    <text evidence="3 5">Catalyzes the hydrolysis of phosphatidylcholine with phospholipase A1 activity (PubMed:29605550). Shows hemolytic activity (By similarity).</text>
</comment>
<comment type="catalytic activity">
    <reaction evidence="5">
        <text>a 1,2-diacyl-sn-glycero-3-phosphocholine + H2O = a 2-acyl-sn-glycero-3-phosphocholine + a fatty acid + H(+)</text>
        <dbReference type="Rhea" id="RHEA:18689"/>
        <dbReference type="ChEBI" id="CHEBI:15377"/>
        <dbReference type="ChEBI" id="CHEBI:15378"/>
        <dbReference type="ChEBI" id="CHEBI:28868"/>
        <dbReference type="ChEBI" id="CHEBI:57643"/>
        <dbReference type="ChEBI" id="CHEBI:57875"/>
        <dbReference type="EC" id="3.1.1.32"/>
    </reaction>
</comment>
<comment type="biophysicochemical properties">
    <kinetics>
        <Vmax evidence="5">214.6 umol/min/ug enzyme</Vmax>
    </kinetics>
    <temperatureDependence>
        <text evidence="5">Loses its activity after heat treatment.</text>
    </temperatureDependence>
</comment>
<comment type="subcellular location">
    <subcellularLocation>
        <location evidence="5">Secreted</location>
    </subcellularLocation>
</comment>
<comment type="tissue specificity">
    <text evidence="8">Expressed by the venom gland.</text>
</comment>
<comment type="PTM">
    <text evidence="5">Is not glycosylated.</text>
</comment>
<comment type="allergen">
    <text evidence="2">Causes an allergic reaction in human. Binds to IgE.</text>
</comment>
<comment type="similarity">
    <text evidence="7">Belongs to the AB hydrolase superfamily. Lipase family.</text>
</comment>
<evidence type="ECO:0000250" key="1"/>
<evidence type="ECO:0000250" key="2">
    <source>
        <dbReference type="UniProtKB" id="A2VBC4"/>
    </source>
</evidence>
<evidence type="ECO:0000250" key="3">
    <source>
        <dbReference type="UniProtKB" id="P0DMB7"/>
    </source>
</evidence>
<evidence type="ECO:0000255" key="4">
    <source>
        <dbReference type="PROSITE-ProRule" id="PRU10037"/>
    </source>
</evidence>
<evidence type="ECO:0000269" key="5">
    <source>
    </source>
</evidence>
<evidence type="ECO:0000303" key="6">
    <source>
    </source>
</evidence>
<evidence type="ECO:0000305" key="7"/>
<evidence type="ECO:0000305" key="8">
    <source>
    </source>
</evidence>
<reference key="1">
    <citation type="journal article" date="2018" name="Toxicon">
        <title>Purification and biochemical characterization of VesT1s, a novel phospholipase A1 isoform isolated from the venom of the greater banded wasp Vespa tropica.</title>
        <authorList>
            <person name="Rungsa P."/>
            <person name="Peigneur S."/>
            <person name="Daduang S."/>
            <person name="Tytgat J."/>
        </authorList>
    </citation>
    <scope>NUCLEOTIDE SEQUENCE [MRNA]</scope>
    <scope>PROTEIN SEQUENCE OF 1-14</scope>
    <scope>FUNCTION</scope>
    <scope>CATALYTIC ACTIVITY</scope>
    <scope>BIOPHYSICOCHEMICAL PROPERTIES</scope>
    <scope>SUBCELLULAR LOCATION</scope>
    <source>
        <tissue>Venom</tissue>
        <tissue>Venom gland</tissue>
    </source>
</reference>
<dbReference type="EC" id="3.1.1.32" evidence="5"/>
<dbReference type="SMR" id="P0DPT0"/>
<dbReference type="ESTHER" id="vestr-vest1">
    <property type="family name" value="Insect_Phospholipase"/>
</dbReference>
<dbReference type="BRENDA" id="3.1.1.32">
    <property type="organism ID" value="16387"/>
</dbReference>
<dbReference type="GO" id="GO:0005615">
    <property type="term" value="C:extracellular space"/>
    <property type="evidence" value="ECO:0007669"/>
    <property type="project" value="TreeGrafter"/>
</dbReference>
<dbReference type="GO" id="GO:0008970">
    <property type="term" value="F:phospholipase A1 activity"/>
    <property type="evidence" value="ECO:0007669"/>
    <property type="project" value="UniProtKB-EC"/>
</dbReference>
<dbReference type="GO" id="GO:0031640">
    <property type="term" value="P:killing of cells of another organism"/>
    <property type="evidence" value="ECO:0007669"/>
    <property type="project" value="UniProtKB-KW"/>
</dbReference>
<dbReference type="GO" id="GO:0016042">
    <property type="term" value="P:lipid catabolic process"/>
    <property type="evidence" value="ECO:0007669"/>
    <property type="project" value="UniProtKB-KW"/>
</dbReference>
<dbReference type="CDD" id="cd00707">
    <property type="entry name" value="Pancreat_lipase_like"/>
    <property type="match status" value="1"/>
</dbReference>
<dbReference type="Gene3D" id="3.40.50.1820">
    <property type="entry name" value="alpha/beta hydrolase"/>
    <property type="match status" value="1"/>
</dbReference>
<dbReference type="InterPro" id="IPR029058">
    <property type="entry name" value="AB_hydrolase_fold"/>
</dbReference>
<dbReference type="InterPro" id="IPR002334">
    <property type="entry name" value="Allerg_PlipaseA1"/>
</dbReference>
<dbReference type="InterPro" id="IPR013818">
    <property type="entry name" value="Lipase"/>
</dbReference>
<dbReference type="InterPro" id="IPR033906">
    <property type="entry name" value="Lipase_N"/>
</dbReference>
<dbReference type="InterPro" id="IPR000734">
    <property type="entry name" value="TAG_lipase"/>
</dbReference>
<dbReference type="PANTHER" id="PTHR11610">
    <property type="entry name" value="LIPASE"/>
    <property type="match status" value="1"/>
</dbReference>
<dbReference type="Pfam" id="PF00151">
    <property type="entry name" value="Lipase"/>
    <property type="match status" value="1"/>
</dbReference>
<dbReference type="PRINTS" id="PR00825">
    <property type="entry name" value="DOLALLERGEN"/>
</dbReference>
<dbReference type="SUPFAM" id="SSF53474">
    <property type="entry name" value="alpha/beta-Hydrolases"/>
    <property type="match status" value="1"/>
</dbReference>
<dbReference type="PROSITE" id="PS00120">
    <property type="entry name" value="LIPASE_SER"/>
    <property type="match status" value="1"/>
</dbReference>
<name>VEST1_VESTR</name>